<evidence type="ECO:0000305" key="1"/>
<dbReference type="EMBL" id="U29363">
    <property type="protein sequence ID" value="AAC43860.1"/>
    <property type="molecule type" value="Genomic_DNA"/>
</dbReference>
<dbReference type="EMBL" id="AL513382">
    <property type="protein sequence ID" value="CAD05998.1"/>
    <property type="molecule type" value="Genomic_DNA"/>
</dbReference>
<dbReference type="EMBL" id="AE014613">
    <property type="protein sequence ID" value="AAO70354.1"/>
    <property type="molecule type" value="Genomic_DNA"/>
</dbReference>
<dbReference type="RefSeq" id="NP_457285.1">
    <property type="nucleotide sequence ID" value="NC_003198.1"/>
</dbReference>
<dbReference type="RefSeq" id="WP_000058738.1">
    <property type="nucleotide sequence ID" value="NZ_WSUR01000005.1"/>
</dbReference>
<dbReference type="SMR" id="Q56022"/>
<dbReference type="STRING" id="220341.gene:17586908"/>
<dbReference type="KEGG" id="stt:t2793"/>
<dbReference type="KEGG" id="sty:STY3014"/>
<dbReference type="PATRIC" id="fig|220341.7.peg.3068"/>
<dbReference type="eggNOG" id="COG1886">
    <property type="taxonomic scope" value="Bacteria"/>
</dbReference>
<dbReference type="HOGENOM" id="CLU_077609_0_0_6"/>
<dbReference type="OMA" id="IYNTKIF"/>
<dbReference type="OrthoDB" id="6561483at2"/>
<dbReference type="PHI-base" id="PHI:643"/>
<dbReference type="Proteomes" id="UP000000541">
    <property type="component" value="Chromosome"/>
</dbReference>
<dbReference type="Proteomes" id="UP000002670">
    <property type="component" value="Chromosome"/>
</dbReference>
<dbReference type="GO" id="GO:0071978">
    <property type="term" value="P:bacterial-type flagellum-dependent swarming motility"/>
    <property type="evidence" value="ECO:0007669"/>
    <property type="project" value="TreeGrafter"/>
</dbReference>
<dbReference type="GO" id="GO:0050918">
    <property type="term" value="P:positive chemotaxis"/>
    <property type="evidence" value="ECO:0007669"/>
    <property type="project" value="TreeGrafter"/>
</dbReference>
<dbReference type="GO" id="GO:0030254">
    <property type="term" value="P:protein secretion by the type III secretion system"/>
    <property type="evidence" value="ECO:0007669"/>
    <property type="project" value="InterPro"/>
</dbReference>
<dbReference type="Gene3D" id="2.30.330.10">
    <property type="entry name" value="SpoA-like"/>
    <property type="match status" value="1"/>
</dbReference>
<dbReference type="InterPro" id="IPR001543">
    <property type="entry name" value="FliN-like_C"/>
</dbReference>
<dbReference type="InterPro" id="IPR036429">
    <property type="entry name" value="SpoA-like_sf"/>
</dbReference>
<dbReference type="InterPro" id="IPR003283">
    <property type="entry name" value="T3SS_OMP_SpaO"/>
</dbReference>
<dbReference type="InterPro" id="IPR013385">
    <property type="entry name" value="T3SS_SpaO/YscQ/SpaO"/>
</dbReference>
<dbReference type="NCBIfam" id="NF006018">
    <property type="entry name" value="PRK08158.1"/>
    <property type="match status" value="1"/>
</dbReference>
<dbReference type="NCBIfam" id="TIGR02551">
    <property type="entry name" value="SpaO_YscQ"/>
    <property type="match status" value="1"/>
</dbReference>
<dbReference type="PANTHER" id="PTHR30034">
    <property type="entry name" value="FLAGELLAR MOTOR SWITCH PROTEIN FLIM"/>
    <property type="match status" value="1"/>
</dbReference>
<dbReference type="PANTHER" id="PTHR30034:SF5">
    <property type="entry name" value="SECRETION SYSTEM APPARATUS PROTEIN SSAQ"/>
    <property type="match status" value="1"/>
</dbReference>
<dbReference type="Pfam" id="PF01052">
    <property type="entry name" value="FliMN_C"/>
    <property type="match status" value="1"/>
</dbReference>
<dbReference type="PRINTS" id="PR01339">
    <property type="entry name" value="TYPE3OMOPROT"/>
</dbReference>
<dbReference type="SUPFAM" id="SSF101801">
    <property type="entry name" value="Surface presentation of antigens (SPOA)"/>
    <property type="match status" value="1"/>
</dbReference>
<organism>
    <name type="scientific">Salmonella typhi</name>
    <dbReference type="NCBI Taxonomy" id="90370"/>
    <lineage>
        <taxon>Bacteria</taxon>
        <taxon>Pseudomonadati</taxon>
        <taxon>Pseudomonadota</taxon>
        <taxon>Gammaproteobacteria</taxon>
        <taxon>Enterobacterales</taxon>
        <taxon>Enterobacteriaceae</taxon>
        <taxon>Salmonella</taxon>
    </lineage>
</organism>
<gene>
    <name type="primary">spaO</name>
    <name type="ordered locus">STY3014</name>
    <name type="ordered locus">t2793</name>
</gene>
<comment type="function">
    <text>Involved in a secretory pathway responsible for the surface presentation of determinants needed for the entry of Salmonella species into mammalian cells.</text>
</comment>
<comment type="similarity">
    <text evidence="1">Belongs to the FliN/MopA/SpaO family.</text>
</comment>
<feature type="chain" id="PRO_0000184125" description="Surface presentation of antigens protein SpaO">
    <location>
        <begin position="1"/>
        <end position="303"/>
    </location>
</feature>
<accession>Q56022</accession>
<protein>
    <recommendedName>
        <fullName>Surface presentation of antigens protein SpaO</fullName>
    </recommendedName>
</protein>
<proteinExistence type="inferred from homology"/>
<keyword id="KW-0843">Virulence</keyword>
<sequence length="303" mass="33764">MSLRVRQIDRREWLLAQTATECQRHGREATLEYPTRQGMWVRLSDAEKRWSAWIKPGGWLEHVSPALAGAAVSAGAEHLVVPWLAATERPFELPVPHLSCRRLCVENPVPGSALPEGKLLHIMSDRGGLWFEHLPELPAVGGGRPKMLRWPLRFVIGSSDTQRSLLGRIGIGDVLLIRTSRAEVYCYAKKLGHFNRVEGGIIVETLDIQHIEEENNTTETAETLPGLNQLPVKLEFVLYRKNVTLAELEAMGQQQLLSLPTNVELNVEIMANGVLLGNGELVQMNDTLGVEIHEWLSESGNGE</sequence>
<name>SPAO_SALTI</name>
<reference key="1">
    <citation type="journal article" date="1995" name="Proc. Natl. Acad. Sci. U.S.A.">
        <title>Relationship between evolutionary rate and cellular location among the Inv/Spa invasion proteins of Salmonella enterica.</title>
        <authorList>
            <person name="Li J."/>
            <person name="Ochman H."/>
            <person name="Groisman E.A."/>
            <person name="Boyd E.F."/>
            <person name="Solomon F."/>
            <person name="Nelson K."/>
            <person name="Selander R.K."/>
        </authorList>
    </citation>
    <scope>NUCLEOTIDE SEQUENCE [GENOMIC DNA]</scope>
    <source>
        <strain>S3333</strain>
    </source>
</reference>
<reference key="2">
    <citation type="journal article" date="2001" name="Nature">
        <title>Complete genome sequence of a multiple drug resistant Salmonella enterica serovar Typhi CT18.</title>
        <authorList>
            <person name="Parkhill J."/>
            <person name="Dougan G."/>
            <person name="James K.D."/>
            <person name="Thomson N.R."/>
            <person name="Pickard D."/>
            <person name="Wain J."/>
            <person name="Churcher C.M."/>
            <person name="Mungall K.L."/>
            <person name="Bentley S.D."/>
            <person name="Holden M.T.G."/>
            <person name="Sebaihia M."/>
            <person name="Baker S."/>
            <person name="Basham D."/>
            <person name="Brooks K."/>
            <person name="Chillingworth T."/>
            <person name="Connerton P."/>
            <person name="Cronin A."/>
            <person name="Davis P."/>
            <person name="Davies R.M."/>
            <person name="Dowd L."/>
            <person name="White N."/>
            <person name="Farrar J."/>
            <person name="Feltwell T."/>
            <person name="Hamlin N."/>
            <person name="Haque A."/>
            <person name="Hien T.T."/>
            <person name="Holroyd S."/>
            <person name="Jagels K."/>
            <person name="Krogh A."/>
            <person name="Larsen T.S."/>
            <person name="Leather S."/>
            <person name="Moule S."/>
            <person name="O'Gaora P."/>
            <person name="Parry C."/>
            <person name="Quail M.A."/>
            <person name="Rutherford K.M."/>
            <person name="Simmonds M."/>
            <person name="Skelton J."/>
            <person name="Stevens K."/>
            <person name="Whitehead S."/>
            <person name="Barrell B.G."/>
        </authorList>
    </citation>
    <scope>NUCLEOTIDE SEQUENCE [LARGE SCALE GENOMIC DNA]</scope>
    <source>
        <strain>CT18</strain>
    </source>
</reference>
<reference key="3">
    <citation type="journal article" date="2003" name="J. Bacteriol.">
        <title>Comparative genomics of Salmonella enterica serovar Typhi strains Ty2 and CT18.</title>
        <authorList>
            <person name="Deng W."/>
            <person name="Liou S.-R."/>
            <person name="Plunkett G. III"/>
            <person name="Mayhew G.F."/>
            <person name="Rose D.J."/>
            <person name="Burland V."/>
            <person name="Kodoyianni V."/>
            <person name="Schwartz D.C."/>
            <person name="Blattner F.R."/>
        </authorList>
    </citation>
    <scope>NUCLEOTIDE SEQUENCE [LARGE SCALE GENOMIC DNA]</scope>
    <source>
        <strain>ATCC 700931 / Ty2</strain>
    </source>
</reference>